<evidence type="ECO:0000250" key="1"/>
<evidence type="ECO:0000305" key="2"/>
<feature type="chain" id="PRO_0000124421" description="Small ribosomal subunit protein uS7c">
    <location>
        <begin position="1"/>
        <end position="155"/>
    </location>
</feature>
<name>RR7_ALLTE</name>
<proteinExistence type="inferred from homology"/>
<geneLocation type="chloroplast"/>
<keyword id="KW-0150">Chloroplast</keyword>
<keyword id="KW-0934">Plastid</keyword>
<keyword id="KW-0687">Ribonucleoprotein</keyword>
<keyword id="KW-0689">Ribosomal protein</keyword>
<keyword id="KW-0694">RNA-binding</keyword>
<keyword id="KW-0699">rRNA-binding</keyword>
<organism>
    <name type="scientific">Allium textile</name>
    <name type="common">Textile onion</name>
    <name type="synonym">Allium reticulatum</name>
    <dbReference type="NCBI Taxonomy" id="207935"/>
    <lineage>
        <taxon>Eukaryota</taxon>
        <taxon>Viridiplantae</taxon>
        <taxon>Streptophyta</taxon>
        <taxon>Embryophyta</taxon>
        <taxon>Tracheophyta</taxon>
        <taxon>Spermatophyta</taxon>
        <taxon>Magnoliopsida</taxon>
        <taxon>Liliopsida</taxon>
        <taxon>Asparagales</taxon>
        <taxon>Amaryllidaceae</taxon>
        <taxon>Allioideae</taxon>
        <taxon>Allieae</taxon>
        <taxon>Allium</taxon>
    </lineage>
</organism>
<dbReference type="EMBL" id="AY147489">
    <property type="protein sequence ID" value="AAN32072.1"/>
    <property type="molecule type" value="Genomic_DNA"/>
</dbReference>
<dbReference type="SMR" id="Q67ID1"/>
<dbReference type="GO" id="GO:0009507">
    <property type="term" value="C:chloroplast"/>
    <property type="evidence" value="ECO:0007669"/>
    <property type="project" value="UniProtKB-SubCell"/>
</dbReference>
<dbReference type="GO" id="GO:0015935">
    <property type="term" value="C:small ribosomal subunit"/>
    <property type="evidence" value="ECO:0007669"/>
    <property type="project" value="InterPro"/>
</dbReference>
<dbReference type="GO" id="GO:0019843">
    <property type="term" value="F:rRNA binding"/>
    <property type="evidence" value="ECO:0007669"/>
    <property type="project" value="UniProtKB-UniRule"/>
</dbReference>
<dbReference type="GO" id="GO:0003735">
    <property type="term" value="F:structural constituent of ribosome"/>
    <property type="evidence" value="ECO:0007669"/>
    <property type="project" value="InterPro"/>
</dbReference>
<dbReference type="GO" id="GO:0006412">
    <property type="term" value="P:translation"/>
    <property type="evidence" value="ECO:0007669"/>
    <property type="project" value="UniProtKB-UniRule"/>
</dbReference>
<dbReference type="CDD" id="cd14871">
    <property type="entry name" value="uS7_Chloroplast"/>
    <property type="match status" value="1"/>
</dbReference>
<dbReference type="FunFam" id="1.10.455.10:FF:000001">
    <property type="entry name" value="30S ribosomal protein S7"/>
    <property type="match status" value="1"/>
</dbReference>
<dbReference type="Gene3D" id="1.10.455.10">
    <property type="entry name" value="Ribosomal protein S7 domain"/>
    <property type="match status" value="1"/>
</dbReference>
<dbReference type="HAMAP" id="MF_00480_B">
    <property type="entry name" value="Ribosomal_uS7_B"/>
    <property type="match status" value="1"/>
</dbReference>
<dbReference type="InterPro" id="IPR000235">
    <property type="entry name" value="Ribosomal_uS7"/>
</dbReference>
<dbReference type="InterPro" id="IPR005717">
    <property type="entry name" value="Ribosomal_uS7_bac/org-type"/>
</dbReference>
<dbReference type="InterPro" id="IPR020606">
    <property type="entry name" value="Ribosomal_uS7_CS"/>
</dbReference>
<dbReference type="InterPro" id="IPR023798">
    <property type="entry name" value="Ribosomal_uS7_dom"/>
</dbReference>
<dbReference type="InterPro" id="IPR036823">
    <property type="entry name" value="Ribosomal_uS7_dom_sf"/>
</dbReference>
<dbReference type="NCBIfam" id="TIGR01029">
    <property type="entry name" value="rpsG_bact"/>
    <property type="match status" value="1"/>
</dbReference>
<dbReference type="PANTHER" id="PTHR11205">
    <property type="entry name" value="RIBOSOMAL PROTEIN S7"/>
    <property type="match status" value="1"/>
</dbReference>
<dbReference type="Pfam" id="PF00177">
    <property type="entry name" value="Ribosomal_S7"/>
    <property type="match status" value="1"/>
</dbReference>
<dbReference type="PIRSF" id="PIRSF002122">
    <property type="entry name" value="RPS7p_RPS7a_RPS5e_RPS7o"/>
    <property type="match status" value="1"/>
</dbReference>
<dbReference type="SUPFAM" id="SSF47973">
    <property type="entry name" value="Ribosomal protein S7"/>
    <property type="match status" value="1"/>
</dbReference>
<dbReference type="PROSITE" id="PS00052">
    <property type="entry name" value="RIBOSOMAL_S7"/>
    <property type="match status" value="1"/>
</dbReference>
<gene>
    <name type="primary">rps7</name>
</gene>
<protein>
    <recommendedName>
        <fullName evidence="2">Small ribosomal subunit protein uS7c</fullName>
    </recommendedName>
    <alternativeName>
        <fullName>30S ribosomal protein S7, chloroplastic</fullName>
    </alternativeName>
</protein>
<reference key="1">
    <citation type="submission" date="2002-09" db="EMBL/GenBank/DDBJ databases">
        <title>Phylogenetic relationships among the major lineages of Asparagales based on a large chloroplast data set.</title>
        <authorList>
            <person name="McPherson M.A."/>
            <person name="Rai H.S."/>
            <person name="Wong W.A."/>
            <person name="Graham S.W."/>
        </authorList>
    </citation>
    <scope>NUCLEOTIDE SEQUENCE [GENOMIC DNA]</scope>
</reference>
<comment type="function">
    <text evidence="1">One of the primary rRNA binding proteins, it binds directly to 16S rRNA where it nucleates assembly of the head domain of the 30S subunit.</text>
</comment>
<comment type="subunit">
    <text>Part of the 30S ribosomal subunit.</text>
</comment>
<comment type="subcellular location">
    <subcellularLocation>
        <location>Plastid</location>
        <location>Chloroplast</location>
    </subcellularLocation>
</comment>
<comment type="similarity">
    <text evidence="2">Belongs to the universal ribosomal protein uS7 family.</text>
</comment>
<accession>Q67ID1</accession>
<sequence length="155" mass="17333">MSRRGTAEEKTAKSDPIYRNRLVNMLVNRILKHGKKSLAYQIIYQAVKKMQQKTETNPLSVLRQAIRGVTPDIAVKARRVGGSTHQVPIEIGSTQGKALAIRWLLGASRKRPGRNMAFKLSSELVDAAKGSGDAIRKKEETHRMAEANRAFAHFR</sequence>